<feature type="chain" id="PRO_5000140117" description="Movement protein TGB1">
    <location>
        <begin position="1"/>
        <end position="384"/>
    </location>
</feature>
<feature type="domain" description="(+)RNA virus helicase ATP-binding">
    <location>
        <begin position="88"/>
        <end position="238"/>
    </location>
</feature>
<feature type="domain" description="(+)RNA virus helicase C-terminal">
    <location>
        <begin position="239"/>
        <end position="384"/>
    </location>
</feature>
<feature type="region of interest" description="Disordered" evidence="3">
    <location>
        <begin position="1"/>
        <end position="36"/>
    </location>
</feature>
<feature type="binding site" evidence="2">
    <location>
        <begin position="123"/>
        <end position="130"/>
    </location>
    <ligand>
        <name>ATP</name>
        <dbReference type="ChEBI" id="CHEBI:30616"/>
    </ligand>
</feature>
<protein>
    <recommendedName>
        <fullName>Movement protein TGB1</fullName>
    </recommendedName>
    <alternativeName>
        <fullName>P42</fullName>
    </alternativeName>
    <alternativeName>
        <fullName>Triple gene block 1 protein</fullName>
        <shortName>TGBp1</shortName>
    </alternativeName>
</protein>
<evidence type="ECO:0000250" key="1"/>
<evidence type="ECO:0000255" key="2"/>
<evidence type="ECO:0000256" key="3">
    <source>
        <dbReference type="SAM" id="MobiDB-lite"/>
    </source>
</evidence>
<evidence type="ECO:0000269" key="4">
    <source>
    </source>
</evidence>
<evidence type="ECO:0000269" key="5">
    <source>
    </source>
</evidence>
<evidence type="ECO:0000305" key="6"/>
<comment type="function">
    <text evidence="1">Transports viral genome to neighboring plant cells directly through plasmodesmata, without any budding. The movement protein allows efficient cell to cell propagation, by bypassing the host cell wall barrier. Engages in homologous interactions leading to the formation of a ribonucleoprotein complex containing viral genomic and messenger RNAs (vRNPs). TGBp2 and TGBp3 are necessary for intracellular delivery of TGBp1-containing vRNPs to plasmodesmata (By similarity).</text>
</comment>
<comment type="subunit">
    <text evidence="1">Homooligomer. Interacts with movement protein TGB3 (By similarity).</text>
</comment>
<comment type="subcellular location">
    <subcellularLocation>
        <location evidence="4 5">Host cell junction</location>
        <location evidence="4 5">Host plasmodesma</location>
    </subcellularLocation>
</comment>
<comment type="similarity">
    <text evidence="6">Belongs to the virgaviridae/benyvirus TGB1 movement protein family.</text>
</comment>
<dbReference type="EMBL" id="D84411">
    <property type="protein sequence ID" value="BAA12342.1"/>
    <property type="molecule type" value="Genomic_RNA"/>
</dbReference>
<dbReference type="RefSeq" id="NP_612617.1">
    <property type="nucleotide sequence ID" value="NC_003515.1"/>
</dbReference>
<dbReference type="SMR" id="Q65674"/>
<dbReference type="KEGG" id="vg:991084"/>
<dbReference type="Proteomes" id="UP000001100">
    <property type="component" value="Genome"/>
</dbReference>
<dbReference type="GO" id="GO:0044219">
    <property type="term" value="C:host cell plasmodesma"/>
    <property type="evidence" value="ECO:0007669"/>
    <property type="project" value="UniProtKB-SubCell"/>
</dbReference>
<dbReference type="GO" id="GO:0005524">
    <property type="term" value="F:ATP binding"/>
    <property type="evidence" value="ECO:0007669"/>
    <property type="project" value="UniProtKB-KW"/>
</dbReference>
<dbReference type="GO" id="GO:0046740">
    <property type="term" value="P:transport of virus in host, cell to cell"/>
    <property type="evidence" value="ECO:0007669"/>
    <property type="project" value="UniProtKB-KW"/>
</dbReference>
<dbReference type="InterPro" id="IPR027351">
    <property type="entry name" value="(+)RNA_virus_helicase_core_dom"/>
</dbReference>
<dbReference type="InterPro" id="IPR027417">
    <property type="entry name" value="P-loop_NTPase"/>
</dbReference>
<dbReference type="Pfam" id="PF01443">
    <property type="entry name" value="Viral_helicase1"/>
    <property type="match status" value="1"/>
</dbReference>
<dbReference type="SUPFAM" id="SSF52540">
    <property type="entry name" value="P-loop containing nucleoside triphosphate hydrolases"/>
    <property type="match status" value="1"/>
</dbReference>
<dbReference type="PROSITE" id="PS51657">
    <property type="entry name" value="PSRV_HELICASE"/>
    <property type="match status" value="1"/>
</dbReference>
<organism>
    <name type="scientific">Beet necrotic yellow vein virus (isolate Japan/S)</name>
    <name type="common">BNYVV</name>
    <dbReference type="NCBI Taxonomy" id="652670"/>
    <lineage>
        <taxon>Viruses</taxon>
        <taxon>Riboviria</taxon>
        <taxon>Orthornavirae</taxon>
        <taxon>Kitrinoviricota</taxon>
        <taxon>Alsuviricetes</taxon>
        <taxon>Hepelivirales</taxon>
        <taxon>Benyviridae</taxon>
        <taxon>Benyvirus</taxon>
        <taxon>Beet necrotic yellow vein virus</taxon>
    </lineage>
</organism>
<gene>
    <name type="ORF">ORF4</name>
</gene>
<organismHost>
    <name type="scientific">Beta macrocarpa</name>
    <name type="common">Beet</name>
    <name type="synonym">Beta vulgaris subsp. macrocarpa</name>
    <dbReference type="NCBI Taxonomy" id="343494"/>
</organismHost>
<organismHost>
    <name type="scientific">Beta vulgaris</name>
    <name type="common">Sugar beet</name>
    <dbReference type="NCBI Taxonomy" id="161934"/>
</organismHost>
<organismHost>
    <name type="scientific">Spinacia oleracea</name>
    <name type="common">Spinach</name>
    <dbReference type="NCBI Taxonomy" id="3562"/>
</organismHost>
<accession>Q65674</accession>
<proteinExistence type="inferred from homology"/>
<sequence>MVQVQRRTGGDKGAKGNRASSAPVRSRRMTQDDWSRTHPDDIFSVIEKTLVEDGYKWNGVKPGHCDWGKLKESGAIDNFRGTLEGELGKNCDLTCNAAAVKLDTLQKVKMSSDWTARVGIVLGAPGVGKSTSIKNLLDKFGAKHKMVLCLPFSQLLEGVFAGRLDTFLVDDLFCRSVGYGKYNTMLVDEVTRVHMCEILVLAGHLGVKNVICFGDPAQGLNYKAGSAVNYNFPIIAECYASRRFGKATADLINSSNGGGKPVVGNNEVKDSWTFEELCGKILDMSTVLVATRETQKFLLEDNIESILYSDAHGQTYDVVTIILEDEFDDAAICDPNVRAVLLTRARKGGMIKMGPNIAARFKNGDFNSRGVSKSCTGDTFCEDR</sequence>
<keyword id="KW-0067">ATP-binding</keyword>
<keyword id="KW-0175">Coiled coil</keyword>
<keyword id="KW-1031">Host cell junction</keyword>
<keyword id="KW-0547">Nucleotide-binding</keyword>
<keyword id="KW-1185">Reference proteome</keyword>
<keyword id="KW-0813">Transport</keyword>
<keyword id="KW-0916">Viral movement protein</keyword>
<name>TGB1_BNYVS</name>
<reference key="1">
    <citation type="journal article" date="1996" name="Arch. Virol.">
        <title>Complete nucleotide sequence of the Japanese isolate S of beet necrotic yellow vein virus RNA and comparison with European isolates.</title>
        <authorList>
            <person name="Saito M."/>
            <person name="Kiguchi T."/>
            <person name="Kusume T."/>
            <person name="Tamada T."/>
        </authorList>
    </citation>
    <scope>NUCLEOTIDE SEQUENCE [GENOMIC RNA]</scope>
</reference>
<reference key="2">
    <citation type="journal article" date="2000" name="Mol. Plant Microbe Interact.">
        <title>P42 movement protein of Beet necrotic yellow vein virus is targeted by the movement proteins P13 and P15 to punctate bodies associated with plasmodesmata.</title>
        <authorList>
            <person name="Erhardt M."/>
            <person name="Morant M."/>
            <person name="Ritzenthaler C."/>
            <person name="Stussi-Garaud C."/>
            <person name="Guilley H."/>
            <person name="Richards K."/>
            <person name="Jonard G."/>
            <person name="Bouzoubaa S."/>
            <person name="Gilmer D."/>
        </authorList>
    </citation>
    <scope>SUBCELLULAR LOCATION</scope>
</reference>
<reference key="3">
    <citation type="journal article" date="2005" name="Virology">
        <title>Subcellular localization of the triple gene block movement proteins of Beet necrotic yellow vein virus by electron microscopy.</title>
        <authorList>
            <person name="Erhardt M."/>
            <person name="Vetter G."/>
            <person name="Gilmer D."/>
            <person name="Bouzoubaa S."/>
            <person name="Richards K."/>
            <person name="Jonard G."/>
            <person name="Guilley H."/>
        </authorList>
    </citation>
    <scope>SUBCELLULAR LOCATION</scope>
</reference>